<accession>B6JGI3</accession>
<accession>F8BX80</accession>
<evidence type="ECO:0000255" key="1">
    <source>
        <dbReference type="HAMAP-Rule" id="MF_00178"/>
    </source>
</evidence>
<sequence>MATPRRAQLDDKTDITGARVVIVEARFYDDIQDALLEGAKTELDAAGVAYDILSVPGALEIPAAIAIALDAAKKNGRPYEGAVALGCVIRGDTIHFEIVSAESARGLMDLSVSRSLALGNGIITVNNTEQAWERARADDLNKGGDAARAAIQMIRIKRKLAKP</sequence>
<name>RISB_AFIC5</name>
<organism>
    <name type="scientific">Afipia carboxidovorans (strain ATCC 49405 / DSM 1227 / KCTC 32145 / OM5)</name>
    <name type="common">Oligotropha carboxidovorans</name>
    <dbReference type="NCBI Taxonomy" id="504832"/>
    <lineage>
        <taxon>Bacteria</taxon>
        <taxon>Pseudomonadati</taxon>
        <taxon>Pseudomonadota</taxon>
        <taxon>Alphaproteobacteria</taxon>
        <taxon>Hyphomicrobiales</taxon>
        <taxon>Nitrobacteraceae</taxon>
        <taxon>Afipia</taxon>
    </lineage>
</organism>
<gene>
    <name evidence="1" type="primary">ribH</name>
    <name type="ordered locus">OCAR_5864</name>
    <name type="ordered locus">OCA5_c21540</name>
</gene>
<comment type="function">
    <text evidence="1">Catalyzes the formation of 6,7-dimethyl-8-ribityllumazine by condensation of 5-amino-6-(D-ribitylamino)uracil with 3,4-dihydroxy-2-butanone 4-phosphate. This is the penultimate step in the biosynthesis of riboflavin.</text>
</comment>
<comment type="catalytic activity">
    <reaction evidence="1">
        <text>(2S)-2-hydroxy-3-oxobutyl phosphate + 5-amino-6-(D-ribitylamino)uracil = 6,7-dimethyl-8-(1-D-ribityl)lumazine + phosphate + 2 H2O + H(+)</text>
        <dbReference type="Rhea" id="RHEA:26152"/>
        <dbReference type="ChEBI" id="CHEBI:15377"/>
        <dbReference type="ChEBI" id="CHEBI:15378"/>
        <dbReference type="ChEBI" id="CHEBI:15934"/>
        <dbReference type="ChEBI" id="CHEBI:43474"/>
        <dbReference type="ChEBI" id="CHEBI:58201"/>
        <dbReference type="ChEBI" id="CHEBI:58830"/>
        <dbReference type="EC" id="2.5.1.78"/>
    </reaction>
</comment>
<comment type="pathway">
    <text evidence="1">Cofactor biosynthesis; riboflavin biosynthesis; riboflavin from 2-hydroxy-3-oxobutyl phosphate and 5-amino-6-(D-ribitylamino)uracil: step 1/2.</text>
</comment>
<comment type="similarity">
    <text evidence="1">Belongs to the DMRL synthase family.</text>
</comment>
<keyword id="KW-1185">Reference proteome</keyword>
<keyword id="KW-0686">Riboflavin biosynthesis</keyword>
<keyword id="KW-0808">Transferase</keyword>
<protein>
    <recommendedName>
        <fullName evidence="1">6,7-dimethyl-8-ribityllumazine synthase</fullName>
        <shortName evidence="1">DMRL synthase</shortName>
        <shortName evidence="1">LS</shortName>
        <shortName evidence="1">Lumazine synthase</shortName>
        <ecNumber evidence="1">2.5.1.78</ecNumber>
    </recommendedName>
</protein>
<feature type="chain" id="PRO_1000098212" description="6,7-dimethyl-8-ribityllumazine synthase">
    <location>
        <begin position="1"/>
        <end position="163"/>
    </location>
</feature>
<feature type="active site" description="Proton donor" evidence="1">
    <location>
        <position position="95"/>
    </location>
</feature>
<feature type="binding site" evidence="1">
    <location>
        <position position="27"/>
    </location>
    <ligand>
        <name>5-amino-6-(D-ribitylamino)uracil</name>
        <dbReference type="ChEBI" id="CHEBI:15934"/>
    </ligand>
</feature>
<feature type="binding site" evidence="1">
    <location>
        <begin position="58"/>
        <end position="60"/>
    </location>
    <ligand>
        <name>5-amino-6-(D-ribitylamino)uracil</name>
        <dbReference type="ChEBI" id="CHEBI:15934"/>
    </ligand>
</feature>
<feature type="binding site" evidence="1">
    <location>
        <begin position="87"/>
        <end position="89"/>
    </location>
    <ligand>
        <name>5-amino-6-(D-ribitylamino)uracil</name>
        <dbReference type="ChEBI" id="CHEBI:15934"/>
    </ligand>
</feature>
<feature type="binding site" evidence="1">
    <location>
        <begin position="92"/>
        <end position="93"/>
    </location>
    <ligand>
        <name>(2S)-2-hydroxy-3-oxobutyl phosphate</name>
        <dbReference type="ChEBI" id="CHEBI:58830"/>
    </ligand>
</feature>
<feature type="binding site" evidence="1">
    <location>
        <position position="120"/>
    </location>
    <ligand>
        <name>5-amino-6-(D-ribitylamino)uracil</name>
        <dbReference type="ChEBI" id="CHEBI:15934"/>
    </ligand>
</feature>
<feature type="binding site" evidence="1">
    <location>
        <position position="134"/>
    </location>
    <ligand>
        <name>(2S)-2-hydroxy-3-oxobutyl phosphate</name>
        <dbReference type="ChEBI" id="CHEBI:58830"/>
    </ligand>
</feature>
<proteinExistence type="inferred from homology"/>
<dbReference type="EC" id="2.5.1.78" evidence="1"/>
<dbReference type="EMBL" id="CP001196">
    <property type="protein sequence ID" value="ACI92989.1"/>
    <property type="molecule type" value="Genomic_DNA"/>
</dbReference>
<dbReference type="EMBL" id="CP002826">
    <property type="protein sequence ID" value="AEI06857.1"/>
    <property type="molecule type" value="Genomic_DNA"/>
</dbReference>
<dbReference type="RefSeq" id="WP_012563016.1">
    <property type="nucleotide sequence ID" value="NC_015684.1"/>
</dbReference>
<dbReference type="SMR" id="B6JGI3"/>
<dbReference type="STRING" id="504832.OCA5_c21540"/>
<dbReference type="KEGG" id="oca:OCAR_5864"/>
<dbReference type="KEGG" id="ocg:OCA5_c21540"/>
<dbReference type="PATRIC" id="fig|504832.7.peg.2275"/>
<dbReference type="eggNOG" id="COG0054">
    <property type="taxonomic scope" value="Bacteria"/>
</dbReference>
<dbReference type="HOGENOM" id="CLU_089358_1_2_5"/>
<dbReference type="OrthoDB" id="9809709at2"/>
<dbReference type="UniPathway" id="UPA00275">
    <property type="reaction ID" value="UER00404"/>
</dbReference>
<dbReference type="Proteomes" id="UP000007730">
    <property type="component" value="Chromosome"/>
</dbReference>
<dbReference type="GO" id="GO:0005829">
    <property type="term" value="C:cytosol"/>
    <property type="evidence" value="ECO:0007669"/>
    <property type="project" value="TreeGrafter"/>
</dbReference>
<dbReference type="GO" id="GO:0009349">
    <property type="term" value="C:riboflavin synthase complex"/>
    <property type="evidence" value="ECO:0007669"/>
    <property type="project" value="InterPro"/>
</dbReference>
<dbReference type="GO" id="GO:0000906">
    <property type="term" value="F:6,7-dimethyl-8-ribityllumazine synthase activity"/>
    <property type="evidence" value="ECO:0007669"/>
    <property type="project" value="UniProtKB-UniRule"/>
</dbReference>
<dbReference type="GO" id="GO:0009231">
    <property type="term" value="P:riboflavin biosynthetic process"/>
    <property type="evidence" value="ECO:0007669"/>
    <property type="project" value="UniProtKB-UniRule"/>
</dbReference>
<dbReference type="CDD" id="cd09209">
    <property type="entry name" value="Lumazine_synthase-I"/>
    <property type="match status" value="1"/>
</dbReference>
<dbReference type="Gene3D" id="3.40.50.960">
    <property type="entry name" value="Lumazine/riboflavin synthase"/>
    <property type="match status" value="1"/>
</dbReference>
<dbReference type="HAMAP" id="MF_00178">
    <property type="entry name" value="Lumazine_synth"/>
    <property type="match status" value="1"/>
</dbReference>
<dbReference type="InterPro" id="IPR034964">
    <property type="entry name" value="LS"/>
</dbReference>
<dbReference type="InterPro" id="IPR002180">
    <property type="entry name" value="LS/RS"/>
</dbReference>
<dbReference type="InterPro" id="IPR036467">
    <property type="entry name" value="LS/RS_sf"/>
</dbReference>
<dbReference type="NCBIfam" id="TIGR00114">
    <property type="entry name" value="lumazine-synth"/>
    <property type="match status" value="1"/>
</dbReference>
<dbReference type="PANTHER" id="PTHR21058:SF0">
    <property type="entry name" value="6,7-DIMETHYL-8-RIBITYLLUMAZINE SYNTHASE"/>
    <property type="match status" value="1"/>
</dbReference>
<dbReference type="PANTHER" id="PTHR21058">
    <property type="entry name" value="6,7-DIMETHYL-8-RIBITYLLUMAZINE SYNTHASE DMRL SYNTHASE LUMAZINE SYNTHASE"/>
    <property type="match status" value="1"/>
</dbReference>
<dbReference type="Pfam" id="PF00885">
    <property type="entry name" value="DMRL_synthase"/>
    <property type="match status" value="1"/>
</dbReference>
<dbReference type="SUPFAM" id="SSF52121">
    <property type="entry name" value="Lumazine synthase"/>
    <property type="match status" value="1"/>
</dbReference>
<reference key="1">
    <citation type="journal article" date="2008" name="J. Bacteriol.">
        <title>Genome sequence of the chemolithoautotrophic bacterium Oligotropha carboxidovorans OM5T.</title>
        <authorList>
            <person name="Paul D."/>
            <person name="Bridges S."/>
            <person name="Burgess S.C."/>
            <person name="Dandass Y."/>
            <person name="Lawrence M.L."/>
        </authorList>
    </citation>
    <scope>NUCLEOTIDE SEQUENCE [LARGE SCALE GENOMIC DNA]</scope>
    <source>
        <strain>ATCC 49405 / DSM 1227 / KCTC 32145 / OM5</strain>
    </source>
</reference>
<reference key="2">
    <citation type="journal article" date="2011" name="J. Bacteriol.">
        <title>Complete genome sequences of the chemolithoautotrophic Oligotropha carboxidovorans strains OM4 and OM5.</title>
        <authorList>
            <person name="Volland S."/>
            <person name="Rachinger M."/>
            <person name="Strittmatter A."/>
            <person name="Daniel R."/>
            <person name="Gottschalk G."/>
            <person name="Meyer O."/>
        </authorList>
    </citation>
    <scope>NUCLEOTIDE SEQUENCE [LARGE SCALE GENOMIC DNA]</scope>
    <source>
        <strain>ATCC 49405 / DSM 1227 / KCTC 32145 / OM5</strain>
    </source>
</reference>